<protein>
    <recommendedName>
        <fullName>14 kDa fusion protein</fullName>
    </recommendedName>
</protein>
<dbReference type="EMBL" id="M37086">
    <property type="protein sequence ID" value="AAA47961.1"/>
    <property type="molecule type" value="Genomic_DNA"/>
</dbReference>
<dbReference type="PIR" id="A37076">
    <property type="entry name" value="WMVZ65"/>
</dbReference>
<dbReference type="SMR" id="P26312"/>
<dbReference type="GO" id="GO:0016020">
    <property type="term" value="C:membrane"/>
    <property type="evidence" value="ECO:0007669"/>
    <property type="project" value="UniProtKB-KW"/>
</dbReference>
<dbReference type="GO" id="GO:0019031">
    <property type="term" value="C:viral envelope"/>
    <property type="evidence" value="ECO:0007669"/>
    <property type="project" value="InterPro"/>
</dbReference>
<dbReference type="GO" id="GO:0055036">
    <property type="term" value="C:virion membrane"/>
    <property type="evidence" value="ECO:0007669"/>
    <property type="project" value="UniProtKB-SubCell"/>
</dbReference>
<dbReference type="GO" id="GO:0019064">
    <property type="term" value="P:fusion of virus membrane with host plasma membrane"/>
    <property type="evidence" value="ECO:0007669"/>
    <property type="project" value="InterPro"/>
</dbReference>
<dbReference type="GO" id="GO:0046718">
    <property type="term" value="P:symbiont entry into host cell"/>
    <property type="evidence" value="ECO:0007669"/>
    <property type="project" value="UniProtKB-KW"/>
</dbReference>
<dbReference type="GO" id="GO:0019062">
    <property type="term" value="P:virion attachment to host cell"/>
    <property type="evidence" value="ECO:0007669"/>
    <property type="project" value="UniProtKB-KW"/>
</dbReference>
<dbReference type="Gene3D" id="1.20.5.110">
    <property type="match status" value="1"/>
</dbReference>
<dbReference type="InterPro" id="IPR003436">
    <property type="entry name" value="Chordopox_Fusion/A27"/>
</dbReference>
<dbReference type="Pfam" id="PF02346">
    <property type="entry name" value="Vac_Fusion"/>
    <property type="match status" value="1"/>
</dbReference>
<dbReference type="PRINTS" id="PR01847">
    <property type="entry name" value="VIRALFUSION"/>
</dbReference>
<accession>P26312</accession>
<reference key="1">
    <citation type="journal article" date="1990" name="Virology">
        <title>Vaccinia virus induces cell fusion at acid pH and this activity is mediated by the N-terminus of the 14-kDa virus envelope protein.</title>
        <authorList>
            <person name="Gong S."/>
            <person name="Lai C."/>
            <person name="Esteban M."/>
        </authorList>
    </citation>
    <scope>NUCLEOTIDE SEQUENCE [GENOMIC DNA]</scope>
</reference>
<keyword id="KW-0325">Glycoprotein</keyword>
<keyword id="KW-0945">Host-virus interaction</keyword>
<keyword id="KW-0472">Membrane</keyword>
<keyword id="KW-1161">Viral attachment to host cell</keyword>
<keyword id="KW-0946">Virion</keyword>
<keyword id="KW-1160">Virus entry into host cell</keyword>
<sequence>MLEFFRPPRARSPRELVQLLPEAWTTSRSSTGSANPSASRKPARYPRIHAPELQSGEARWPLWSRIRPLEDPLKQRLTNLEKKITNVTTKFEQIEKCCKRNDEVLFRLENHAETLRAAMISLAKKIDVQTGRRPYE</sequence>
<gene>
    <name type="ORF">A27L</name>
</gene>
<proteinExistence type="inferred from homology"/>
<organism>
    <name type="scientific">Vaccinia virus (strain WR 65-16)</name>
    <name type="common">VACV</name>
    <dbReference type="NCBI Taxonomy" id="10247"/>
    <lineage>
        <taxon>Viruses</taxon>
        <taxon>Varidnaviria</taxon>
        <taxon>Bamfordvirae</taxon>
        <taxon>Nucleocytoviricota</taxon>
        <taxon>Pokkesviricetes</taxon>
        <taxon>Chitovirales</taxon>
        <taxon>Poxviridae</taxon>
        <taxon>Chordopoxvirinae</taxon>
        <taxon>Orthopoxvirus</taxon>
        <taxon>Vaccinia virus</taxon>
    </lineage>
</organism>
<comment type="function">
    <text>This protein appears to play an important role in virus penetration at the level of cell fusion. The N-terminal proximal region is essential for fusion ability. Essential in fusing the outermost of the two Golgi-derived membranes enveloping the virus with the plasma membrane, and in its subsequent release extracellularly.</text>
</comment>
<comment type="subunit">
    <text>Homotrimer, covalently linked.</text>
</comment>
<comment type="subcellular location">
    <subcellularLocation>
        <location>Virion membrane</location>
    </subcellularLocation>
    <text>Envelope fraction of virions.</text>
</comment>
<comment type="similarity">
    <text evidence="3">Belongs to the poxviruses fusion protein family.</text>
</comment>
<feature type="chain" id="PRO_0000099213" description="14 kDa fusion protein">
    <location>
        <begin position="1"/>
        <end position="136"/>
    </location>
</feature>
<feature type="region of interest" description="Disordered" evidence="2">
    <location>
        <begin position="22"/>
        <end position="50"/>
    </location>
</feature>
<feature type="compositionally biased region" description="Polar residues" evidence="2">
    <location>
        <begin position="24"/>
        <end position="38"/>
    </location>
</feature>
<feature type="glycosylation site" description="N-linked (GlcNAc...) asparagine; by host" evidence="1">
    <location>
        <position position="86"/>
    </location>
</feature>
<organismHost>
    <name type="scientific">Homo sapiens</name>
    <name type="common">Human</name>
    <dbReference type="NCBI Taxonomy" id="9606"/>
</organismHost>
<name>VFUS_VACC6</name>
<evidence type="ECO:0000255" key="1"/>
<evidence type="ECO:0000256" key="2">
    <source>
        <dbReference type="SAM" id="MobiDB-lite"/>
    </source>
</evidence>
<evidence type="ECO:0000305" key="3"/>